<comment type="function">
    <text evidence="1">Binds to the 23S rRNA.</text>
</comment>
<comment type="similarity">
    <text evidence="1">Belongs to the bacterial ribosomal protein bL9 family.</text>
</comment>
<proteinExistence type="inferred from homology"/>
<name>RL9_BUCA5</name>
<keyword id="KW-0687">Ribonucleoprotein</keyword>
<keyword id="KW-0689">Ribosomal protein</keyword>
<keyword id="KW-0694">RNA-binding</keyword>
<keyword id="KW-0699">rRNA-binding</keyword>
<dbReference type="EMBL" id="CP001161">
    <property type="protein sequence ID" value="ACL30902.1"/>
    <property type="molecule type" value="Genomic_DNA"/>
</dbReference>
<dbReference type="RefSeq" id="WP_009874510.1">
    <property type="nucleotide sequence ID" value="NC_011833.1"/>
</dbReference>
<dbReference type="SMR" id="B8D8C6"/>
<dbReference type="KEGG" id="bap:BUAP5A_555"/>
<dbReference type="HOGENOM" id="CLU_078938_4_1_6"/>
<dbReference type="OrthoDB" id="9788336at2"/>
<dbReference type="Proteomes" id="UP000006904">
    <property type="component" value="Chromosome"/>
</dbReference>
<dbReference type="GO" id="GO:1990904">
    <property type="term" value="C:ribonucleoprotein complex"/>
    <property type="evidence" value="ECO:0007669"/>
    <property type="project" value="UniProtKB-KW"/>
</dbReference>
<dbReference type="GO" id="GO:0005840">
    <property type="term" value="C:ribosome"/>
    <property type="evidence" value="ECO:0007669"/>
    <property type="project" value="UniProtKB-KW"/>
</dbReference>
<dbReference type="GO" id="GO:0019843">
    <property type="term" value="F:rRNA binding"/>
    <property type="evidence" value="ECO:0007669"/>
    <property type="project" value="UniProtKB-UniRule"/>
</dbReference>
<dbReference type="GO" id="GO:0003735">
    <property type="term" value="F:structural constituent of ribosome"/>
    <property type="evidence" value="ECO:0007669"/>
    <property type="project" value="InterPro"/>
</dbReference>
<dbReference type="GO" id="GO:0006412">
    <property type="term" value="P:translation"/>
    <property type="evidence" value="ECO:0007669"/>
    <property type="project" value="UniProtKB-UniRule"/>
</dbReference>
<dbReference type="Gene3D" id="3.10.430.100">
    <property type="entry name" value="Ribosomal protein L9, C-terminal domain"/>
    <property type="match status" value="1"/>
</dbReference>
<dbReference type="Gene3D" id="3.40.5.10">
    <property type="entry name" value="Ribosomal protein L9, N-terminal domain"/>
    <property type="match status" value="1"/>
</dbReference>
<dbReference type="HAMAP" id="MF_00503">
    <property type="entry name" value="Ribosomal_bL9"/>
    <property type="match status" value="1"/>
</dbReference>
<dbReference type="InterPro" id="IPR000244">
    <property type="entry name" value="Ribosomal_bL9"/>
</dbReference>
<dbReference type="InterPro" id="IPR009027">
    <property type="entry name" value="Ribosomal_bL9/RNase_H1_N"/>
</dbReference>
<dbReference type="InterPro" id="IPR020594">
    <property type="entry name" value="Ribosomal_bL9_bac/chp"/>
</dbReference>
<dbReference type="InterPro" id="IPR020069">
    <property type="entry name" value="Ribosomal_bL9_C"/>
</dbReference>
<dbReference type="InterPro" id="IPR036791">
    <property type="entry name" value="Ribosomal_bL9_C_sf"/>
</dbReference>
<dbReference type="InterPro" id="IPR020070">
    <property type="entry name" value="Ribosomal_bL9_N"/>
</dbReference>
<dbReference type="InterPro" id="IPR036935">
    <property type="entry name" value="Ribosomal_bL9_N_sf"/>
</dbReference>
<dbReference type="NCBIfam" id="TIGR00158">
    <property type="entry name" value="L9"/>
    <property type="match status" value="1"/>
</dbReference>
<dbReference type="PANTHER" id="PTHR21368">
    <property type="entry name" value="50S RIBOSOMAL PROTEIN L9"/>
    <property type="match status" value="1"/>
</dbReference>
<dbReference type="Pfam" id="PF03948">
    <property type="entry name" value="Ribosomal_L9_C"/>
    <property type="match status" value="1"/>
</dbReference>
<dbReference type="Pfam" id="PF01281">
    <property type="entry name" value="Ribosomal_L9_N"/>
    <property type="match status" value="1"/>
</dbReference>
<dbReference type="SUPFAM" id="SSF55658">
    <property type="entry name" value="L9 N-domain-like"/>
    <property type="match status" value="1"/>
</dbReference>
<dbReference type="SUPFAM" id="SSF55653">
    <property type="entry name" value="Ribosomal protein L9 C-domain"/>
    <property type="match status" value="1"/>
</dbReference>
<dbReference type="PROSITE" id="PS00651">
    <property type="entry name" value="RIBOSOMAL_L9"/>
    <property type="match status" value="1"/>
</dbReference>
<protein>
    <recommendedName>
        <fullName evidence="1">Large ribosomal subunit protein bL9</fullName>
    </recommendedName>
    <alternativeName>
        <fullName evidence="2">50S ribosomal protein L9</fullName>
    </alternativeName>
</protein>
<organism>
    <name type="scientific">Buchnera aphidicola subsp. Acyrthosiphon pisum (strain 5A)</name>
    <dbReference type="NCBI Taxonomy" id="563178"/>
    <lineage>
        <taxon>Bacteria</taxon>
        <taxon>Pseudomonadati</taxon>
        <taxon>Pseudomonadota</taxon>
        <taxon>Gammaproteobacteria</taxon>
        <taxon>Enterobacterales</taxon>
        <taxon>Erwiniaceae</taxon>
        <taxon>Buchnera</taxon>
    </lineage>
</organism>
<reference key="1">
    <citation type="journal article" date="2009" name="Science">
        <title>The dynamics and time scale of ongoing genomic erosion in symbiotic bacteria.</title>
        <authorList>
            <person name="Moran N.A."/>
            <person name="McLaughlin H.J."/>
            <person name="Sorek R."/>
        </authorList>
    </citation>
    <scope>NUCLEOTIDE SEQUENCE [LARGE SCALE GENOMIC DNA]</scope>
    <source>
        <strain>5A</strain>
    </source>
</reference>
<evidence type="ECO:0000255" key="1">
    <source>
        <dbReference type="HAMAP-Rule" id="MF_00503"/>
    </source>
</evidence>
<evidence type="ECO:0000305" key="2"/>
<feature type="chain" id="PRO_1000196230" description="Large ribosomal subunit protein bL9">
    <location>
        <begin position="1"/>
        <end position="150"/>
    </location>
</feature>
<accession>B8D8C6</accession>
<gene>
    <name evidence="1" type="primary">rplI</name>
    <name type="ordered locus">BUAP5A_555</name>
</gene>
<sequence>MEVILLSKIKKLGDSGAVINVKSGYARNFLIPKGKAILANKKNIESFEAQRIALEKEKINELLIAQSRAEKLKKINSITILSKVGKEGKIFGSVGVRNIIKEIILLGIKINKKEIRLPNGLLRQVGEHIVVFQPHSKVSINFIVKIIAKN</sequence>